<gene>
    <name type="primary">FUT8</name>
    <name type="ordered locus">At1g14100</name>
    <name type="ORF">F7A19.18</name>
</gene>
<comment type="function">
    <text>May be involved in cell wall biosynthesis. May act as a fucosyltransferase.</text>
</comment>
<comment type="pathway">
    <text>Protein modification; protein glycosylation.</text>
</comment>
<comment type="subcellular location">
    <subcellularLocation>
        <location evidence="1">Golgi apparatus</location>
        <location evidence="1">Golgi stack membrane</location>
        <topology evidence="1">Single-pass type II membrane protein</topology>
    </subcellularLocation>
    <text evidence="1">Membrane-bound form in trans cisternae of Golgi.</text>
</comment>
<comment type="tissue specificity">
    <text evidence="3">Expressed in leaves and stems.</text>
</comment>
<comment type="similarity">
    <text evidence="4">Belongs to the glycosyltransferase 37 family.</text>
</comment>
<comment type="sequence caution" evidence="4">
    <conflict type="erroneous initiation">
        <sequence resource="EMBL-CDS" id="AAD39294"/>
    </conflict>
    <text>Truncated N-terminus.</text>
</comment>
<sequence length="516" mass="59286">MKVVITVVTCLFLLSVMQLSFFNIFNYQLLDATTNGSKDSRKSKDKLLGGLLTADFDEDSCLSRYESSLYRKPSPYKPSRYLVSKLRSYEMLHKRCGPGTEAYKKATEILGHDDENHSTKSVGECRYIVWIAVYGLGNRILTLASLFLYALLTDRIMLVDQRTDISDLFCEPFPGTSWLLPLDFPLTDQLDSFNKESPRCYGTMLKNHAINSTTTESIIPSYLCLYLIHDYDDYDKMFFCESDQILIRQVPWLVFNSNLYFIPSLWLIPSFQSELSKLFPQKETVFHHLARYLFHPTNQVWGMITRSYNGYLSRADERLGIQVRVFSKPAGYFQHVMDQILACTQREKLLPEVFVLETQVTNTSRSSKLKAVLVTSLYPEYSEILRQMYWKGPSSTGEIIQIYQPSQEIYQQTDNKLHDQKALAEIYLLSLTDYIVTSDSSTFGYVAQGLGGLKPWILYKPKNHTAPEPPCVRAVSMEPCFLRAPLYGCQAKKVNITPFVMYCEDRITGLKLVDSN</sequence>
<organism>
    <name type="scientific">Arabidopsis thaliana</name>
    <name type="common">Mouse-ear cress</name>
    <dbReference type="NCBI Taxonomy" id="3702"/>
    <lineage>
        <taxon>Eukaryota</taxon>
        <taxon>Viridiplantae</taxon>
        <taxon>Streptophyta</taxon>
        <taxon>Embryophyta</taxon>
        <taxon>Tracheophyta</taxon>
        <taxon>Spermatophyta</taxon>
        <taxon>Magnoliopsida</taxon>
        <taxon>eudicotyledons</taxon>
        <taxon>Gunneridae</taxon>
        <taxon>Pentapetalae</taxon>
        <taxon>rosids</taxon>
        <taxon>malvids</taxon>
        <taxon>Brassicales</taxon>
        <taxon>Brassicaceae</taxon>
        <taxon>Camelineae</taxon>
        <taxon>Arabidopsis</taxon>
    </lineage>
</organism>
<name>FUT8_ARATH</name>
<reference key="1">
    <citation type="journal article" date="2000" name="Nature">
        <title>Sequence and analysis of chromosome 1 of the plant Arabidopsis thaliana.</title>
        <authorList>
            <person name="Theologis A."/>
            <person name="Ecker J.R."/>
            <person name="Palm C.J."/>
            <person name="Federspiel N.A."/>
            <person name="Kaul S."/>
            <person name="White O."/>
            <person name="Alonso J."/>
            <person name="Altafi H."/>
            <person name="Araujo R."/>
            <person name="Bowman C.L."/>
            <person name="Brooks S.Y."/>
            <person name="Buehler E."/>
            <person name="Chan A."/>
            <person name="Chao Q."/>
            <person name="Chen H."/>
            <person name="Cheuk R.F."/>
            <person name="Chin C.W."/>
            <person name="Chung M.K."/>
            <person name="Conn L."/>
            <person name="Conway A.B."/>
            <person name="Conway A.R."/>
            <person name="Creasy T.H."/>
            <person name="Dewar K."/>
            <person name="Dunn P."/>
            <person name="Etgu P."/>
            <person name="Feldblyum T.V."/>
            <person name="Feng J.-D."/>
            <person name="Fong B."/>
            <person name="Fujii C.Y."/>
            <person name="Gill J.E."/>
            <person name="Goldsmith A.D."/>
            <person name="Haas B."/>
            <person name="Hansen N.F."/>
            <person name="Hughes B."/>
            <person name="Huizar L."/>
            <person name="Hunter J.L."/>
            <person name="Jenkins J."/>
            <person name="Johnson-Hopson C."/>
            <person name="Khan S."/>
            <person name="Khaykin E."/>
            <person name="Kim C.J."/>
            <person name="Koo H.L."/>
            <person name="Kremenetskaia I."/>
            <person name="Kurtz D.B."/>
            <person name="Kwan A."/>
            <person name="Lam B."/>
            <person name="Langin-Hooper S."/>
            <person name="Lee A."/>
            <person name="Lee J.M."/>
            <person name="Lenz C.A."/>
            <person name="Li J.H."/>
            <person name="Li Y.-P."/>
            <person name="Lin X."/>
            <person name="Liu S.X."/>
            <person name="Liu Z.A."/>
            <person name="Luros J.S."/>
            <person name="Maiti R."/>
            <person name="Marziali A."/>
            <person name="Militscher J."/>
            <person name="Miranda M."/>
            <person name="Nguyen M."/>
            <person name="Nierman W.C."/>
            <person name="Osborne B.I."/>
            <person name="Pai G."/>
            <person name="Peterson J."/>
            <person name="Pham P.K."/>
            <person name="Rizzo M."/>
            <person name="Rooney T."/>
            <person name="Rowley D."/>
            <person name="Sakano H."/>
            <person name="Salzberg S.L."/>
            <person name="Schwartz J.R."/>
            <person name="Shinn P."/>
            <person name="Southwick A.M."/>
            <person name="Sun H."/>
            <person name="Tallon L.J."/>
            <person name="Tambunga G."/>
            <person name="Toriumi M.J."/>
            <person name="Town C.D."/>
            <person name="Utterback T."/>
            <person name="Van Aken S."/>
            <person name="Vaysberg M."/>
            <person name="Vysotskaia V.S."/>
            <person name="Walker M."/>
            <person name="Wu D."/>
            <person name="Yu G."/>
            <person name="Fraser C.M."/>
            <person name="Venter J.C."/>
            <person name="Davis R.W."/>
        </authorList>
    </citation>
    <scope>NUCLEOTIDE SEQUENCE [LARGE SCALE GENOMIC DNA]</scope>
    <source>
        <strain>cv. Columbia</strain>
    </source>
</reference>
<reference key="2">
    <citation type="journal article" date="2017" name="Plant J.">
        <title>Araport11: a complete reannotation of the Arabidopsis thaliana reference genome.</title>
        <authorList>
            <person name="Cheng C.Y."/>
            <person name="Krishnakumar V."/>
            <person name="Chan A.P."/>
            <person name="Thibaud-Nissen F."/>
            <person name="Schobel S."/>
            <person name="Town C.D."/>
        </authorList>
    </citation>
    <scope>GENOME REANNOTATION</scope>
    <source>
        <strain>cv. Columbia</strain>
    </source>
</reference>
<reference key="3">
    <citation type="journal article" date="2001" name="Plant Physiol.">
        <title>Characterization of a family of Arabidopsis genes related to xyloglucan fucosyltransferase1.</title>
        <authorList>
            <person name="Sarria R."/>
            <person name="Wagner T.A."/>
            <person name="O'Neill M.A."/>
            <person name="Faik A."/>
            <person name="Wilkerson C.G."/>
            <person name="Keegstra K."/>
            <person name="Raikhel N.V."/>
        </authorList>
    </citation>
    <scope>IDENTIFICATION AS A PUTATIVE FUCOSYLTRANSFERASE</scope>
    <scope>TISSUE SPECIFICITY</scope>
</reference>
<keyword id="KW-0961">Cell wall biogenesis/degradation</keyword>
<keyword id="KW-0325">Glycoprotein</keyword>
<keyword id="KW-0328">Glycosyltransferase</keyword>
<keyword id="KW-0333">Golgi apparatus</keyword>
<keyword id="KW-0472">Membrane</keyword>
<keyword id="KW-1185">Reference proteome</keyword>
<keyword id="KW-0735">Signal-anchor</keyword>
<keyword id="KW-0808">Transferase</keyword>
<keyword id="KW-0812">Transmembrane</keyword>
<keyword id="KW-1133">Transmembrane helix</keyword>
<proteinExistence type="evidence at transcript level"/>
<accession>Q9XI78</accession>
<evidence type="ECO:0000250" key="1"/>
<evidence type="ECO:0000255" key="2"/>
<evidence type="ECO:0000269" key="3">
    <source>
    </source>
</evidence>
<evidence type="ECO:0000305" key="4"/>
<feature type="chain" id="PRO_0000193917" description="Probable fucosyltransferase 8">
    <location>
        <begin position="1"/>
        <end position="516"/>
    </location>
</feature>
<feature type="transmembrane region" description="Helical; Signal-anchor for type II membrane protein" evidence="2">
    <location>
        <begin position="5"/>
        <end position="25"/>
    </location>
</feature>
<feature type="topological domain" description="Lumenal" evidence="2">
    <location>
        <begin position="26"/>
        <end position="516"/>
    </location>
</feature>
<feature type="glycosylation site" description="N-linked (GlcNAc...) asparagine" evidence="2">
    <location>
        <position position="35"/>
    </location>
</feature>
<feature type="glycosylation site" description="N-linked (GlcNAc...) asparagine" evidence="2">
    <location>
        <position position="116"/>
    </location>
</feature>
<feature type="glycosylation site" description="N-linked (GlcNAc...) asparagine" evidence="2">
    <location>
        <position position="211"/>
    </location>
</feature>
<feature type="glycosylation site" description="N-linked (GlcNAc...) asparagine" evidence="2">
    <location>
        <position position="362"/>
    </location>
</feature>
<feature type="glycosylation site" description="N-linked (GlcNAc...) asparagine" evidence="2">
    <location>
        <position position="463"/>
    </location>
</feature>
<protein>
    <recommendedName>
        <fullName>Probable fucosyltransferase 8</fullName>
        <shortName>AtFUT8</shortName>
        <ecNumber>2.4.1.-</ecNumber>
    </recommendedName>
</protein>
<dbReference type="EC" id="2.4.1.-"/>
<dbReference type="EMBL" id="AC007576">
    <property type="protein sequence ID" value="AAD39294.1"/>
    <property type="status" value="ALT_INIT"/>
    <property type="molecule type" value="Genomic_DNA"/>
</dbReference>
<dbReference type="EMBL" id="CP002684">
    <property type="protein sequence ID" value="AEE29106.1"/>
    <property type="molecule type" value="Genomic_DNA"/>
</dbReference>
<dbReference type="PIR" id="D86274">
    <property type="entry name" value="D86274"/>
</dbReference>
<dbReference type="RefSeq" id="NP_001077531.1">
    <property type="nucleotide sequence ID" value="NM_001084062.1"/>
</dbReference>
<dbReference type="SMR" id="Q9XI78"/>
<dbReference type="STRING" id="3702.Q9XI78"/>
<dbReference type="CAZy" id="GT37">
    <property type="family name" value="Glycosyltransferase Family 37"/>
</dbReference>
<dbReference type="GlyCosmos" id="Q9XI78">
    <property type="glycosylation" value="5 sites, No reported glycans"/>
</dbReference>
<dbReference type="GlyGen" id="Q9XI78">
    <property type="glycosylation" value="5 sites"/>
</dbReference>
<dbReference type="PaxDb" id="3702-AT1G14100.1"/>
<dbReference type="EnsemblPlants" id="AT1G14100.1">
    <property type="protein sequence ID" value="AT1G14100.1"/>
    <property type="gene ID" value="AT1G14100"/>
</dbReference>
<dbReference type="GeneID" id="5007694"/>
<dbReference type="Gramene" id="AT1G14100.1">
    <property type="protein sequence ID" value="AT1G14100.1"/>
    <property type="gene ID" value="AT1G14100"/>
</dbReference>
<dbReference type="KEGG" id="ath:AT1G14100"/>
<dbReference type="Araport" id="AT1G14100"/>
<dbReference type="TAIR" id="AT1G14100">
    <property type="gene designation" value="FUT8"/>
</dbReference>
<dbReference type="eggNOG" id="ENOG502SC60">
    <property type="taxonomic scope" value="Eukaryota"/>
</dbReference>
<dbReference type="HOGENOM" id="CLU_001992_2_1_1"/>
<dbReference type="InParanoid" id="Q9XI78"/>
<dbReference type="OMA" id="WLVFNSN"/>
<dbReference type="BioCyc" id="ARA:AT1G14100-MONOMER"/>
<dbReference type="UniPathway" id="UPA00378"/>
<dbReference type="PRO" id="PR:Q9XI78"/>
<dbReference type="Proteomes" id="UP000006548">
    <property type="component" value="Chromosome 1"/>
</dbReference>
<dbReference type="ExpressionAtlas" id="Q9XI78">
    <property type="expression patterns" value="baseline and differential"/>
</dbReference>
<dbReference type="GO" id="GO:0032580">
    <property type="term" value="C:Golgi cisterna membrane"/>
    <property type="evidence" value="ECO:0007669"/>
    <property type="project" value="UniProtKB-SubCell"/>
</dbReference>
<dbReference type="GO" id="GO:0008107">
    <property type="term" value="F:galactoside 2-alpha-L-fucosyltransferase activity"/>
    <property type="evidence" value="ECO:0007669"/>
    <property type="project" value="InterPro"/>
</dbReference>
<dbReference type="GO" id="GO:0042546">
    <property type="term" value="P:cell wall biogenesis"/>
    <property type="evidence" value="ECO:0007669"/>
    <property type="project" value="InterPro"/>
</dbReference>
<dbReference type="GO" id="GO:0071555">
    <property type="term" value="P:cell wall organization"/>
    <property type="evidence" value="ECO:0007669"/>
    <property type="project" value="UniProtKB-KW"/>
</dbReference>
<dbReference type="GO" id="GO:0006486">
    <property type="term" value="P:protein glycosylation"/>
    <property type="evidence" value="ECO:0007669"/>
    <property type="project" value="UniProtKB-UniPathway"/>
</dbReference>
<dbReference type="FunFam" id="3.40.50.11340:FF:000005">
    <property type="entry name" value="Galactoside 2-alpha-L-fucosyltransferase"/>
    <property type="match status" value="1"/>
</dbReference>
<dbReference type="Gene3D" id="3.40.50.11340">
    <property type="match status" value="1"/>
</dbReference>
<dbReference type="InterPro" id="IPR004938">
    <property type="entry name" value="XG_FTase"/>
</dbReference>
<dbReference type="PANTHER" id="PTHR31889">
    <property type="entry name" value="FUCOSYLTRANSFERASE 2-RELATED"/>
    <property type="match status" value="1"/>
</dbReference>
<dbReference type="PANTHER" id="PTHR31889:SF59">
    <property type="entry name" value="FUCOSYLTRANSFERASE 8-RELATED"/>
    <property type="match status" value="1"/>
</dbReference>
<dbReference type="Pfam" id="PF03254">
    <property type="entry name" value="XG_FTase"/>
    <property type="match status" value="1"/>
</dbReference>